<comment type="function">
    <text evidence="1">Binds to the N-acetyl-9-O-acetylneuraminic acid residues on the cell surface, bringing about the attachment of the virus particle to the cell. Plays a major role in the determination of host range restriction and virulence. Class I viral fusion protein. Responsible for penetration of the virus into the cell cytoplasm by mediating the fusion of the membrane of the endocytosed virus particle with the endosomal membrane. Low pH in endosomes induce an irreversible conformational change in HEF2, releasing the fusion hydrophobic peptide. Several trimers are required to form a competent fusion pore. Displays a receptor-destroying activity which is a neuraminidate-O-acetyl esterase. This activity cleaves off any receptor on the cell surface, which would otherwise prevent virions release. These cleavages prevent self-aggregation and ensure the efficient spread of the progeny virus from cell to cell (By similarity).</text>
</comment>
<comment type="catalytic activity">
    <reaction>
        <text>N-acetyl-9-O-acetylneuraminate + H2O = N-acetylneuraminate + acetate + H(+)</text>
        <dbReference type="Rhea" id="RHEA:22600"/>
        <dbReference type="ChEBI" id="CHEBI:15377"/>
        <dbReference type="ChEBI" id="CHEBI:15378"/>
        <dbReference type="ChEBI" id="CHEBI:28999"/>
        <dbReference type="ChEBI" id="CHEBI:30089"/>
        <dbReference type="ChEBI" id="CHEBI:35418"/>
        <dbReference type="EC" id="3.1.1.53"/>
    </reaction>
</comment>
<comment type="catalytic activity">
    <reaction>
        <text>N-acetyl-4-O-acetylneuraminate + H2O = N-acetylneuraminate + acetate + H(+)</text>
        <dbReference type="Rhea" id="RHEA:25564"/>
        <dbReference type="ChEBI" id="CHEBI:15377"/>
        <dbReference type="ChEBI" id="CHEBI:15378"/>
        <dbReference type="ChEBI" id="CHEBI:29006"/>
        <dbReference type="ChEBI" id="CHEBI:30089"/>
        <dbReference type="ChEBI" id="CHEBI:35418"/>
        <dbReference type="EC" id="3.1.1.53"/>
    </reaction>
</comment>
<comment type="subunit">
    <text evidence="1">Homotrimer of disulfide-linked HEF1-HEF2.</text>
</comment>
<comment type="subcellular location">
    <subcellularLocation>
        <location evidence="3">Virion membrane</location>
        <topology evidence="3">Single-pass type I membrane protein</topology>
    </subcellularLocation>
    <subcellularLocation>
        <location evidence="1">Host cell membrane</location>
        <topology evidence="1">Single-pass type I membrane protein</topology>
    </subcellularLocation>
</comment>
<comment type="PTM">
    <text evidence="1">In natural infection, inactive HEF is matured into HEF1 and HEF2 outside the cell by one or more trypsin-like, arginine-specific endoprotease.</text>
</comment>
<comment type="similarity">
    <text evidence="3">Belongs to the influenza type C/coronaviruses hemagglutinin-esterase family.</text>
</comment>
<accession>P07971</accession>
<feature type="signal peptide">
    <location>
        <begin position="1" status="less than"/>
        <end position="1"/>
    </location>
</feature>
<feature type="chain" id="PRO_0000039148" description="Hemagglutinin-esterase-fusion glycoprotein chain 1">
    <location>
        <begin position="2"/>
        <end position="433"/>
    </location>
</feature>
<feature type="chain" id="PRO_0000039149" description="Hemagglutinin-esterase-fusion glycoprotein chain 2">
    <location>
        <begin position="434"/>
        <end position="642"/>
    </location>
</feature>
<feature type="topological domain" description="Extracellular" evidence="2">
    <location>
        <begin position="2"/>
        <end position="617"/>
    </location>
</feature>
<feature type="transmembrane region" description="Helical" evidence="2">
    <location>
        <begin position="618"/>
        <end position="638"/>
    </location>
</feature>
<feature type="topological domain" description="Cytoplasmic" evidence="2">
    <location>
        <begin position="639"/>
        <end position="642"/>
    </location>
</feature>
<feature type="region of interest" description="Fusion domain-1" evidence="1">
    <location>
        <begin position="2"/>
        <end position="27"/>
    </location>
</feature>
<feature type="region of interest" description="Esterase domain-1" evidence="1">
    <location>
        <begin position="28"/>
        <end position="138"/>
    </location>
</feature>
<feature type="region of interest" description="N-acetyl-9-O-acetylneuraminic acid binding" evidence="1">
    <location>
        <begin position="138"/>
        <end position="297"/>
    </location>
</feature>
<feature type="region of interest" description="Esterase domain-2" evidence="1">
    <location>
        <begin position="298"/>
        <end position="352"/>
    </location>
</feature>
<feature type="region of interest" description="Fusion domain-2" evidence="1">
    <location>
        <begin position="353"/>
        <end position="638"/>
    </location>
</feature>
<feature type="active site" description="Nucleophile" evidence="1">
    <location>
        <position position="58"/>
    </location>
</feature>
<feature type="active site" description="Charge relay system" evidence="1">
    <location>
        <position position="353"/>
    </location>
</feature>
<feature type="active site" description="Charge relay system" evidence="1">
    <location>
        <position position="356"/>
    </location>
</feature>
<feature type="glycosylation site" description="N-linked (GlcNAc...) asparagine; by host" evidence="2">
    <location>
        <position position="13"/>
    </location>
</feature>
<feature type="glycosylation site" description="N-linked (GlcNAc...) asparagine; by host" evidence="2">
    <location>
        <position position="48"/>
    </location>
</feature>
<feature type="glycosylation site" description="N-linked (GlcNAc...) asparagine; by host" evidence="2">
    <location>
        <position position="131"/>
    </location>
</feature>
<feature type="glycosylation site" description="N-linked (GlcNAc...) asparagine; by host" evidence="2">
    <location>
        <position position="382"/>
    </location>
</feature>
<feature type="disulfide bond" description="Interchain (between HEF1 and HEF2 chains)" evidence="1">
    <location>
        <begin position="7"/>
        <end position="570"/>
    </location>
</feature>
<feature type="disulfide bond" evidence="1">
    <location>
        <begin position="107"/>
        <end position="152"/>
    </location>
</feature>
<feature type="disulfide bond" evidence="1">
    <location>
        <begin position="127"/>
        <end position="175"/>
    </location>
</feature>
<feature type="disulfide bond" evidence="1">
    <location>
        <begin position="197"/>
        <end position="239"/>
    </location>
</feature>
<feature type="disulfide bond" evidence="1">
    <location>
        <begin position="216"/>
        <end position="303"/>
    </location>
</feature>
<feature type="disulfide bond" evidence="1">
    <location>
        <begin position="224"/>
        <end position="276"/>
    </location>
</feature>
<feature type="disulfide bond" evidence="1">
    <location>
        <begin position="333"/>
        <end position="339"/>
    </location>
</feature>
<feature type="non-terminal residue">
    <location>
        <position position="1"/>
    </location>
</feature>
<evidence type="ECO:0000250" key="1"/>
<evidence type="ECO:0000255" key="2"/>
<evidence type="ECO:0000305" key="3"/>
<organism>
    <name type="scientific">Influenza C virus (strain C/Great lakes/1167/1954)</name>
    <dbReference type="NCBI Taxonomy" id="11557"/>
    <lineage>
        <taxon>Viruses</taxon>
        <taxon>Riboviria</taxon>
        <taxon>Orthornavirae</taxon>
        <taxon>Negarnaviricota</taxon>
        <taxon>Polyploviricotina</taxon>
        <taxon>Insthoviricetes</taxon>
        <taxon>Articulavirales</taxon>
        <taxon>Orthomyxoviridae</taxon>
        <taxon>Gammainfluenzavirus</taxon>
        <taxon>Gammainfluenzavirus influenzae</taxon>
        <taxon>Influenza C virus</taxon>
    </lineage>
</organism>
<reference key="1">
    <citation type="journal article" date="1985" name="Virology">
        <title>Noncumulative sequence changes in the hemagglutinin genes of influenza C virus isolates.</title>
        <authorList>
            <person name="Buonagurio D.A."/>
            <person name="Nakada S."/>
            <person name="Desselberger U."/>
            <person name="Krystal M."/>
            <person name="Palese P."/>
        </authorList>
    </citation>
    <scope>NUCLEOTIDE SEQUENCE [GENOMIC RNA]</scope>
</reference>
<gene>
    <name type="primary">HE</name>
</gene>
<keyword id="KW-1015">Disulfide bond</keyword>
<keyword id="KW-1170">Fusion of virus membrane with host endosomal membrane</keyword>
<keyword id="KW-1168">Fusion of virus membrane with host membrane</keyword>
<keyword id="KW-0325">Glycoprotein</keyword>
<keyword id="KW-0348">Hemagglutinin</keyword>
<keyword id="KW-1032">Host cell membrane</keyword>
<keyword id="KW-1043">Host membrane</keyword>
<keyword id="KW-0945">Host-virus interaction</keyword>
<keyword id="KW-0378">Hydrolase</keyword>
<keyword id="KW-0472">Membrane</keyword>
<keyword id="KW-0732">Signal</keyword>
<keyword id="KW-0812">Transmembrane</keyword>
<keyword id="KW-1133">Transmembrane helix</keyword>
<keyword id="KW-1161">Viral attachment to host cell</keyword>
<keyword id="KW-0261">Viral envelope protein</keyword>
<keyword id="KW-1162">Viral penetration into host cytoplasm</keyword>
<keyword id="KW-0946">Virion</keyword>
<keyword id="KW-1160">Virus entry into host cell</keyword>
<organismHost>
    <name type="scientific">Homo sapiens</name>
    <name type="common">Human</name>
    <dbReference type="NCBI Taxonomy" id="9606"/>
</organismHost>
<organismHost>
    <name type="scientific">Sus scrofa</name>
    <name type="common">Pig</name>
    <dbReference type="NCBI Taxonomy" id="9823"/>
</organismHost>
<dbReference type="EC" id="3.1.1.53"/>
<dbReference type="EMBL" id="M11639">
    <property type="protein sequence ID" value="AAA43784.1"/>
    <property type="molecule type" value="Genomic_RNA"/>
</dbReference>
<dbReference type="SMR" id="P07971"/>
<dbReference type="GlyCosmos" id="P07971">
    <property type="glycosylation" value="4 sites, No reported glycans"/>
</dbReference>
<dbReference type="GO" id="GO:0020002">
    <property type="term" value="C:host cell plasma membrane"/>
    <property type="evidence" value="ECO:0007669"/>
    <property type="project" value="UniProtKB-SubCell"/>
</dbReference>
<dbReference type="GO" id="GO:0016020">
    <property type="term" value="C:membrane"/>
    <property type="evidence" value="ECO:0007669"/>
    <property type="project" value="UniProtKB-KW"/>
</dbReference>
<dbReference type="GO" id="GO:0019031">
    <property type="term" value="C:viral envelope"/>
    <property type="evidence" value="ECO:0007669"/>
    <property type="project" value="UniProtKB-KW"/>
</dbReference>
<dbReference type="GO" id="GO:0055036">
    <property type="term" value="C:virion membrane"/>
    <property type="evidence" value="ECO:0007669"/>
    <property type="project" value="UniProtKB-SubCell"/>
</dbReference>
<dbReference type="GO" id="GO:0046789">
    <property type="term" value="F:host cell surface receptor binding"/>
    <property type="evidence" value="ECO:0007669"/>
    <property type="project" value="InterPro"/>
</dbReference>
<dbReference type="GO" id="GO:0106331">
    <property type="term" value="F:sialate 4-O-acetylesterase activity"/>
    <property type="evidence" value="ECO:0007669"/>
    <property type="project" value="RHEA"/>
</dbReference>
<dbReference type="GO" id="GO:0106330">
    <property type="term" value="F:sialate 9-O-acetylesterase activity"/>
    <property type="evidence" value="ECO:0007669"/>
    <property type="project" value="RHEA"/>
</dbReference>
<dbReference type="GO" id="GO:0039654">
    <property type="term" value="P:fusion of virus membrane with host endosome membrane"/>
    <property type="evidence" value="ECO:0007669"/>
    <property type="project" value="UniProtKB-KW"/>
</dbReference>
<dbReference type="GO" id="GO:0019064">
    <property type="term" value="P:fusion of virus membrane with host plasma membrane"/>
    <property type="evidence" value="ECO:0007669"/>
    <property type="project" value="InterPro"/>
</dbReference>
<dbReference type="GO" id="GO:0046718">
    <property type="term" value="P:symbiont entry into host cell"/>
    <property type="evidence" value="ECO:0007669"/>
    <property type="project" value="UniProtKB-KW"/>
</dbReference>
<dbReference type="GO" id="GO:0019062">
    <property type="term" value="P:virion attachment to host cell"/>
    <property type="evidence" value="ECO:0007669"/>
    <property type="project" value="UniProtKB-KW"/>
</dbReference>
<dbReference type="Gene3D" id="2.20.70.20">
    <property type="match status" value="2"/>
</dbReference>
<dbReference type="Gene3D" id="3.90.20.10">
    <property type="match status" value="1"/>
</dbReference>
<dbReference type="InterPro" id="IPR008980">
    <property type="entry name" value="Capsid_hemagglutn"/>
</dbReference>
<dbReference type="InterPro" id="IPR007142">
    <property type="entry name" value="Hemagglutn-estrase_core"/>
</dbReference>
<dbReference type="InterPro" id="IPR003860">
    <property type="entry name" value="Hemagglutn-estrase_hemagglutn"/>
</dbReference>
<dbReference type="InterPro" id="IPR014831">
    <property type="entry name" value="Hemagglutn_stalk_influenz-C"/>
</dbReference>
<dbReference type="Pfam" id="PF03996">
    <property type="entry name" value="Hema_esterase"/>
    <property type="match status" value="1"/>
</dbReference>
<dbReference type="Pfam" id="PF02710">
    <property type="entry name" value="Hema_HEFG"/>
    <property type="match status" value="1"/>
</dbReference>
<dbReference type="Pfam" id="PF08720">
    <property type="entry name" value="Hema_stalk"/>
    <property type="match status" value="1"/>
</dbReference>
<dbReference type="SUPFAM" id="SSF58064">
    <property type="entry name" value="Influenza hemagglutinin (stalk)"/>
    <property type="match status" value="1"/>
</dbReference>
<dbReference type="SUPFAM" id="SSF52266">
    <property type="entry name" value="SGNH hydrolase"/>
    <property type="match status" value="1"/>
</dbReference>
<dbReference type="SUPFAM" id="SSF49818">
    <property type="entry name" value="Viral protein domain"/>
    <property type="match status" value="1"/>
</dbReference>
<proteinExistence type="inferred from homology"/>
<sequence length="642" mass="70704">AEKIKICLQKQANSSFSLHNGFGGNLYATEEKRMFELVKPKAGASVLNQSTWIGFGDSRTDKSNSAFPRSADVSAKTADKFRSLSGGSLMLSMFGPPGKVDYLYQGCGKHKVFYEGVNWSPHAAIDCYRKNWTDIKLNFQKNIYELASQSHCMSLVNALDKTIPLQVTAEVAKNCNNSFLKNPALYTQEVNPSKQICGEENLAFFTLPTQFGTYECKLHLVASCYFIYDSKEVYNKRGCDNYFQVIYDSSGKVVGGLDNRVSPYTGNTGDTPTMQCDMLQLKPGRYSVRSSPRFLLMPERSYCFDMKEKGLVTAVQSVWGKGRKSDYAVDQACLSTPGCMLIQKQKPYIGEADDHHGDQEMRELLSGLDYEARCISQSGWVNETSPFTEEYLLPPKFGRCPLAAKEESIPKIPDGLLIPTSGTDTTVTKPKSRIFGNDDLIIGLLFVAIVETGIGGYLLGSRKESGGGVTKESAEKGFEKIGNDIQILRSSTNIAIEKLNDRITHDEQAIRDLTLEIENARSEALLGELGIIRALLVGNISIGLQESLWELASEITNRAGDLAVEVSPGCWIIDNNICDQSCQNFIFKFNETAPVPTIPPLDTKIDLQSDPFYWGSSLGLAITTPISLAALAISGIAICRTK</sequence>
<name>HEMA_INCGL</name>
<protein>
    <recommendedName>
        <fullName>Hemagglutinin-esterase-fusion glycoprotein</fullName>
        <shortName>HEF</shortName>
        <ecNumber>3.1.1.53</ecNumber>
    </recommendedName>
    <component>
        <recommendedName>
            <fullName>Hemagglutinin-esterase-fusion glycoprotein chain 1</fullName>
            <shortName>HEF1</shortName>
        </recommendedName>
    </component>
    <component>
        <recommendedName>
            <fullName>Hemagglutinin-esterase-fusion glycoprotein chain 2</fullName>
            <shortName>HEF2</shortName>
        </recommendedName>
    </component>
</protein>